<protein>
    <recommendedName>
        <fullName evidence="2">Phosphoribosylamine--glycine ligase</fullName>
        <ecNumber evidence="2">6.3.4.13</ecNumber>
    </recommendedName>
    <alternativeName>
        <fullName evidence="2">GARS</fullName>
    </alternativeName>
    <alternativeName>
        <fullName evidence="2">Glycinamide ribonucleotide synthetase</fullName>
    </alternativeName>
    <alternativeName>
        <fullName evidence="2">Phosphoribosylglycinamide synthetase</fullName>
    </alternativeName>
</protein>
<name>PUR2_STRP6</name>
<organism>
    <name type="scientific">Streptococcus pyogenes serotype M6 (strain ATCC BAA-946 / MGAS10394)</name>
    <dbReference type="NCBI Taxonomy" id="286636"/>
    <lineage>
        <taxon>Bacteria</taxon>
        <taxon>Bacillati</taxon>
        <taxon>Bacillota</taxon>
        <taxon>Bacilli</taxon>
        <taxon>Lactobacillales</taxon>
        <taxon>Streptococcaceae</taxon>
        <taxon>Streptococcus</taxon>
    </lineage>
</organism>
<gene>
    <name evidence="2" type="primary">purD</name>
    <name type="ordered locus">M6_Spy0078</name>
</gene>
<keyword id="KW-0067">ATP-binding</keyword>
<keyword id="KW-0436">Ligase</keyword>
<keyword id="KW-0460">Magnesium</keyword>
<keyword id="KW-0464">Manganese</keyword>
<keyword id="KW-0479">Metal-binding</keyword>
<keyword id="KW-0547">Nucleotide-binding</keyword>
<keyword id="KW-0658">Purine biosynthesis</keyword>
<comment type="catalytic activity">
    <reaction evidence="2">
        <text>5-phospho-beta-D-ribosylamine + glycine + ATP = N(1)-(5-phospho-beta-D-ribosyl)glycinamide + ADP + phosphate + H(+)</text>
        <dbReference type="Rhea" id="RHEA:17453"/>
        <dbReference type="ChEBI" id="CHEBI:15378"/>
        <dbReference type="ChEBI" id="CHEBI:30616"/>
        <dbReference type="ChEBI" id="CHEBI:43474"/>
        <dbReference type="ChEBI" id="CHEBI:57305"/>
        <dbReference type="ChEBI" id="CHEBI:58681"/>
        <dbReference type="ChEBI" id="CHEBI:143788"/>
        <dbReference type="ChEBI" id="CHEBI:456216"/>
        <dbReference type="EC" id="6.3.4.13"/>
    </reaction>
</comment>
<comment type="cofactor">
    <cofactor evidence="1">
        <name>Mg(2+)</name>
        <dbReference type="ChEBI" id="CHEBI:18420"/>
    </cofactor>
    <cofactor evidence="1">
        <name>Mn(2+)</name>
        <dbReference type="ChEBI" id="CHEBI:29035"/>
    </cofactor>
    <text evidence="1">Binds 1 Mg(2+) or Mn(2+) ion per subunit.</text>
</comment>
<comment type="pathway">
    <text evidence="2">Purine metabolism; IMP biosynthesis via de novo pathway; N(1)-(5-phospho-D-ribosyl)glycinamide from 5-phospho-alpha-D-ribose 1-diphosphate: step 2/2.</text>
</comment>
<comment type="similarity">
    <text evidence="2">Belongs to the GARS family.</text>
</comment>
<comment type="sequence caution" evidence="3">
    <conflict type="erroneous initiation">
        <sequence resource="EMBL-CDS" id="AAT86213"/>
    </conflict>
</comment>
<accession>Q5XEF0</accession>
<evidence type="ECO:0000250" key="1"/>
<evidence type="ECO:0000255" key="2">
    <source>
        <dbReference type="HAMAP-Rule" id="MF_00138"/>
    </source>
</evidence>
<evidence type="ECO:0000305" key="3"/>
<dbReference type="EC" id="6.3.4.13" evidence="2"/>
<dbReference type="EMBL" id="CP000003">
    <property type="protein sequence ID" value="AAT86213.1"/>
    <property type="status" value="ALT_INIT"/>
    <property type="molecule type" value="Genomic_DNA"/>
</dbReference>
<dbReference type="RefSeq" id="WP_021340276.1">
    <property type="nucleotide sequence ID" value="NC_006086.1"/>
</dbReference>
<dbReference type="SMR" id="Q5XEF0"/>
<dbReference type="KEGG" id="spa:M6_Spy0078"/>
<dbReference type="HOGENOM" id="CLU_027420_3_1_9"/>
<dbReference type="UniPathway" id="UPA00074">
    <property type="reaction ID" value="UER00125"/>
</dbReference>
<dbReference type="Proteomes" id="UP000001167">
    <property type="component" value="Chromosome"/>
</dbReference>
<dbReference type="GO" id="GO:0005524">
    <property type="term" value="F:ATP binding"/>
    <property type="evidence" value="ECO:0007669"/>
    <property type="project" value="UniProtKB-KW"/>
</dbReference>
<dbReference type="GO" id="GO:0046872">
    <property type="term" value="F:metal ion binding"/>
    <property type="evidence" value="ECO:0007669"/>
    <property type="project" value="UniProtKB-KW"/>
</dbReference>
<dbReference type="GO" id="GO:0004637">
    <property type="term" value="F:phosphoribosylamine-glycine ligase activity"/>
    <property type="evidence" value="ECO:0007669"/>
    <property type="project" value="UniProtKB-UniRule"/>
</dbReference>
<dbReference type="GO" id="GO:0006189">
    <property type="term" value="P:'de novo' IMP biosynthetic process"/>
    <property type="evidence" value="ECO:0007669"/>
    <property type="project" value="UniProtKB-UniRule"/>
</dbReference>
<dbReference type="GO" id="GO:0009113">
    <property type="term" value="P:purine nucleobase biosynthetic process"/>
    <property type="evidence" value="ECO:0007669"/>
    <property type="project" value="InterPro"/>
</dbReference>
<dbReference type="FunFam" id="3.30.1490.20:FF:000006">
    <property type="entry name" value="phosphoribosylamine--glycine ligase, chloroplastic-like"/>
    <property type="match status" value="1"/>
</dbReference>
<dbReference type="Gene3D" id="3.40.50.20">
    <property type="match status" value="1"/>
</dbReference>
<dbReference type="Gene3D" id="3.30.1490.20">
    <property type="entry name" value="ATP-grasp fold, A domain"/>
    <property type="match status" value="1"/>
</dbReference>
<dbReference type="Gene3D" id="3.30.470.20">
    <property type="entry name" value="ATP-grasp fold, B domain"/>
    <property type="match status" value="1"/>
</dbReference>
<dbReference type="Gene3D" id="3.90.600.10">
    <property type="entry name" value="Phosphoribosylglycinamide synthetase, C-terminal domain"/>
    <property type="match status" value="1"/>
</dbReference>
<dbReference type="HAMAP" id="MF_00138">
    <property type="entry name" value="GARS"/>
    <property type="match status" value="1"/>
</dbReference>
<dbReference type="InterPro" id="IPR011761">
    <property type="entry name" value="ATP-grasp"/>
</dbReference>
<dbReference type="InterPro" id="IPR013815">
    <property type="entry name" value="ATP_grasp_subdomain_1"/>
</dbReference>
<dbReference type="InterPro" id="IPR016185">
    <property type="entry name" value="PreATP-grasp_dom_sf"/>
</dbReference>
<dbReference type="InterPro" id="IPR020561">
    <property type="entry name" value="PRibGlycinamid_synth_ATP-grasp"/>
</dbReference>
<dbReference type="InterPro" id="IPR000115">
    <property type="entry name" value="PRibGlycinamide_synth"/>
</dbReference>
<dbReference type="InterPro" id="IPR020560">
    <property type="entry name" value="PRibGlycinamide_synth_C-dom"/>
</dbReference>
<dbReference type="InterPro" id="IPR037123">
    <property type="entry name" value="PRibGlycinamide_synth_C_sf"/>
</dbReference>
<dbReference type="InterPro" id="IPR020559">
    <property type="entry name" value="PRibGlycinamide_synth_CS"/>
</dbReference>
<dbReference type="InterPro" id="IPR020562">
    <property type="entry name" value="PRibGlycinamide_synth_N"/>
</dbReference>
<dbReference type="InterPro" id="IPR011054">
    <property type="entry name" value="Rudment_hybrid_motif"/>
</dbReference>
<dbReference type="NCBIfam" id="TIGR00877">
    <property type="entry name" value="purD"/>
    <property type="match status" value="1"/>
</dbReference>
<dbReference type="PANTHER" id="PTHR43472">
    <property type="entry name" value="PHOSPHORIBOSYLAMINE--GLYCINE LIGASE"/>
    <property type="match status" value="1"/>
</dbReference>
<dbReference type="PANTHER" id="PTHR43472:SF1">
    <property type="entry name" value="PHOSPHORIBOSYLAMINE--GLYCINE LIGASE, CHLOROPLASTIC"/>
    <property type="match status" value="1"/>
</dbReference>
<dbReference type="Pfam" id="PF01071">
    <property type="entry name" value="GARS_A"/>
    <property type="match status" value="1"/>
</dbReference>
<dbReference type="Pfam" id="PF02843">
    <property type="entry name" value="GARS_C"/>
    <property type="match status" value="1"/>
</dbReference>
<dbReference type="Pfam" id="PF02844">
    <property type="entry name" value="GARS_N"/>
    <property type="match status" value="1"/>
</dbReference>
<dbReference type="SMART" id="SM01209">
    <property type="entry name" value="GARS_A"/>
    <property type="match status" value="1"/>
</dbReference>
<dbReference type="SMART" id="SM01210">
    <property type="entry name" value="GARS_C"/>
    <property type="match status" value="1"/>
</dbReference>
<dbReference type="SUPFAM" id="SSF56059">
    <property type="entry name" value="Glutathione synthetase ATP-binding domain-like"/>
    <property type="match status" value="1"/>
</dbReference>
<dbReference type="SUPFAM" id="SSF52440">
    <property type="entry name" value="PreATP-grasp domain"/>
    <property type="match status" value="1"/>
</dbReference>
<dbReference type="SUPFAM" id="SSF51246">
    <property type="entry name" value="Rudiment single hybrid motif"/>
    <property type="match status" value="1"/>
</dbReference>
<dbReference type="PROSITE" id="PS50975">
    <property type="entry name" value="ATP_GRASP"/>
    <property type="match status" value="1"/>
</dbReference>
<dbReference type="PROSITE" id="PS00184">
    <property type="entry name" value="GARS"/>
    <property type="match status" value="1"/>
</dbReference>
<sequence length="421" mass="45385">MKLLVVGSGGREHAIAKKLLASKGVDQVFVAPGNDGMTLDGLDLVNIVVSEHSRLIAFAKENEISWAFIGPDDALAAGIVDDFNSAGLRAFGPTKAAAELEWSKDFAKEIMVKYNVPTAAYGTFSDFEKAKAYIEEQGAPIVVKADGLALGKGVVVAETVEQAVEAAQEMLLDNKFGDSGARVVIEEFLDGEEFSLFAFVNGDKFYIMPTAQDHKRAFDGDKGPNTGGMGAYAPVPHLPQSVVDTAVETIVRPVLEGMVAEGRPYLGVLYVGLILTADGPKVIEFNSRFGDPETQIILPRLTSDFAQNIDDIMMGIEPYITWQNDGVTLGVVVASEGYPLDYEKGVPLPEKTDGDIITYYAGAKFAENSELLLSNGGRVYMLVTTEDSVKAGQDKIYTQLAQQDTTGLFYRNDIGNKAIKE</sequence>
<feature type="chain" id="PRO_0000151491" description="Phosphoribosylamine--glycine ligase">
    <location>
        <begin position="1"/>
        <end position="421"/>
    </location>
</feature>
<feature type="domain" description="ATP-grasp" evidence="2">
    <location>
        <begin position="108"/>
        <end position="314"/>
    </location>
</feature>
<feature type="binding site" evidence="2">
    <location>
        <begin position="134"/>
        <end position="195"/>
    </location>
    <ligand>
        <name>ATP</name>
        <dbReference type="ChEBI" id="CHEBI:30616"/>
    </ligand>
</feature>
<feature type="binding site" evidence="2">
    <location>
        <position position="284"/>
    </location>
    <ligand>
        <name>Mg(2+)</name>
        <dbReference type="ChEBI" id="CHEBI:18420"/>
    </ligand>
</feature>
<feature type="binding site" evidence="2">
    <location>
        <position position="286"/>
    </location>
    <ligand>
        <name>Mg(2+)</name>
        <dbReference type="ChEBI" id="CHEBI:18420"/>
    </ligand>
</feature>
<reference key="1">
    <citation type="journal article" date="2004" name="J. Infect. Dis.">
        <title>Progress toward characterization of the group A Streptococcus metagenome: complete genome sequence of a macrolide-resistant serotype M6 strain.</title>
        <authorList>
            <person name="Banks D.J."/>
            <person name="Porcella S.F."/>
            <person name="Barbian K.D."/>
            <person name="Beres S.B."/>
            <person name="Philips L.E."/>
            <person name="Voyich J.M."/>
            <person name="DeLeo F.R."/>
            <person name="Martin J.M."/>
            <person name="Somerville G.A."/>
            <person name="Musser J.M."/>
        </authorList>
    </citation>
    <scope>NUCLEOTIDE SEQUENCE [LARGE SCALE GENOMIC DNA]</scope>
    <source>
        <strain>ATCC BAA-946 / MGAS10394</strain>
    </source>
</reference>
<proteinExistence type="inferred from homology"/>